<name>DEOD_SALAR</name>
<accession>A9MRA4</accession>
<evidence type="ECO:0000250" key="1">
    <source>
        <dbReference type="UniProtKB" id="P50389"/>
    </source>
</evidence>
<evidence type="ECO:0000255" key="2">
    <source>
        <dbReference type="HAMAP-Rule" id="MF_01627"/>
    </source>
</evidence>
<dbReference type="EC" id="2.4.2.1" evidence="2"/>
<dbReference type="EMBL" id="CP000880">
    <property type="protein sequence ID" value="ABX22852.1"/>
    <property type="molecule type" value="Genomic_DNA"/>
</dbReference>
<dbReference type="SMR" id="A9MRA4"/>
<dbReference type="STRING" id="41514.SARI_03008"/>
<dbReference type="KEGG" id="ses:SARI_03008"/>
<dbReference type="HOGENOM" id="CLU_068457_2_0_6"/>
<dbReference type="Proteomes" id="UP000002084">
    <property type="component" value="Chromosome"/>
</dbReference>
<dbReference type="GO" id="GO:0005829">
    <property type="term" value="C:cytosol"/>
    <property type="evidence" value="ECO:0007669"/>
    <property type="project" value="TreeGrafter"/>
</dbReference>
<dbReference type="GO" id="GO:0004731">
    <property type="term" value="F:purine-nucleoside phosphorylase activity"/>
    <property type="evidence" value="ECO:0007669"/>
    <property type="project" value="UniProtKB-UniRule"/>
</dbReference>
<dbReference type="GO" id="GO:0006152">
    <property type="term" value="P:purine nucleoside catabolic process"/>
    <property type="evidence" value="ECO:0007669"/>
    <property type="project" value="TreeGrafter"/>
</dbReference>
<dbReference type="CDD" id="cd09006">
    <property type="entry name" value="PNP_EcPNPI-like"/>
    <property type="match status" value="1"/>
</dbReference>
<dbReference type="FunFam" id="3.40.50.1580:FF:000002">
    <property type="entry name" value="Purine nucleoside phosphorylase DeoD-type"/>
    <property type="match status" value="1"/>
</dbReference>
<dbReference type="Gene3D" id="3.40.50.1580">
    <property type="entry name" value="Nucleoside phosphorylase domain"/>
    <property type="match status" value="1"/>
</dbReference>
<dbReference type="HAMAP" id="MF_01627">
    <property type="entry name" value="Pur_nucleosid_phosp"/>
    <property type="match status" value="1"/>
</dbReference>
<dbReference type="InterPro" id="IPR004402">
    <property type="entry name" value="DeoD-type"/>
</dbReference>
<dbReference type="InterPro" id="IPR018016">
    <property type="entry name" value="Nucleoside_phosphorylase_CS"/>
</dbReference>
<dbReference type="InterPro" id="IPR000845">
    <property type="entry name" value="Nucleoside_phosphorylase_d"/>
</dbReference>
<dbReference type="InterPro" id="IPR035994">
    <property type="entry name" value="Nucleoside_phosphorylase_sf"/>
</dbReference>
<dbReference type="NCBIfam" id="TIGR00107">
    <property type="entry name" value="deoD"/>
    <property type="match status" value="1"/>
</dbReference>
<dbReference type="NCBIfam" id="NF004489">
    <property type="entry name" value="PRK05819.1"/>
    <property type="match status" value="1"/>
</dbReference>
<dbReference type="NCBIfam" id="NF009914">
    <property type="entry name" value="PRK13374.1"/>
    <property type="match status" value="1"/>
</dbReference>
<dbReference type="PANTHER" id="PTHR43691:SF2">
    <property type="entry name" value="PURINE NUCLEOSIDE PHOSPHORYLASE DEOD-TYPE"/>
    <property type="match status" value="1"/>
</dbReference>
<dbReference type="PANTHER" id="PTHR43691">
    <property type="entry name" value="URIDINE PHOSPHORYLASE"/>
    <property type="match status" value="1"/>
</dbReference>
<dbReference type="Pfam" id="PF01048">
    <property type="entry name" value="PNP_UDP_1"/>
    <property type="match status" value="1"/>
</dbReference>
<dbReference type="SUPFAM" id="SSF53167">
    <property type="entry name" value="Purine and uridine phosphorylases"/>
    <property type="match status" value="1"/>
</dbReference>
<dbReference type="PROSITE" id="PS01232">
    <property type="entry name" value="PNP_UDP_1"/>
    <property type="match status" value="1"/>
</dbReference>
<reference key="1">
    <citation type="submission" date="2007-11" db="EMBL/GenBank/DDBJ databases">
        <authorList>
            <consortium name="The Salmonella enterica serovar Arizonae Genome Sequencing Project"/>
            <person name="McClelland M."/>
            <person name="Sanderson E.K."/>
            <person name="Porwollik S."/>
            <person name="Spieth J."/>
            <person name="Clifton W.S."/>
            <person name="Fulton R."/>
            <person name="Chunyan W."/>
            <person name="Wollam A."/>
            <person name="Shah N."/>
            <person name="Pepin K."/>
            <person name="Bhonagiri V."/>
            <person name="Nash W."/>
            <person name="Johnson M."/>
            <person name="Thiruvilangam P."/>
            <person name="Wilson R."/>
        </authorList>
    </citation>
    <scope>NUCLEOTIDE SEQUENCE [LARGE SCALE GENOMIC DNA]</scope>
    <source>
        <strain>ATCC BAA-731 / CDC346-86 / RSK2980</strain>
    </source>
</reference>
<keyword id="KW-0328">Glycosyltransferase</keyword>
<keyword id="KW-1185">Reference proteome</keyword>
<keyword id="KW-0808">Transferase</keyword>
<proteinExistence type="inferred from homology"/>
<organism>
    <name type="scientific">Salmonella arizonae (strain ATCC BAA-731 / CDC346-86 / RSK2980)</name>
    <dbReference type="NCBI Taxonomy" id="41514"/>
    <lineage>
        <taxon>Bacteria</taxon>
        <taxon>Pseudomonadati</taxon>
        <taxon>Pseudomonadota</taxon>
        <taxon>Gammaproteobacteria</taxon>
        <taxon>Enterobacterales</taxon>
        <taxon>Enterobacteriaceae</taxon>
        <taxon>Salmonella</taxon>
    </lineage>
</organism>
<comment type="function">
    <text evidence="2">Catalyzes the reversible phosphorolytic breakdown of the N-glycosidic bond in the beta-(deoxy)ribonucleoside molecules, with the formation of the corresponding free purine bases and pentose-1-phosphate.</text>
</comment>
<comment type="catalytic activity">
    <reaction evidence="2">
        <text>a purine D-ribonucleoside + phosphate = a purine nucleobase + alpha-D-ribose 1-phosphate</text>
        <dbReference type="Rhea" id="RHEA:19805"/>
        <dbReference type="ChEBI" id="CHEBI:26386"/>
        <dbReference type="ChEBI" id="CHEBI:43474"/>
        <dbReference type="ChEBI" id="CHEBI:57720"/>
        <dbReference type="ChEBI" id="CHEBI:142355"/>
        <dbReference type="EC" id="2.4.2.1"/>
    </reaction>
</comment>
<comment type="catalytic activity">
    <reaction evidence="2">
        <text>a purine 2'-deoxy-D-ribonucleoside + phosphate = a purine nucleobase + 2-deoxy-alpha-D-ribose 1-phosphate</text>
        <dbReference type="Rhea" id="RHEA:36431"/>
        <dbReference type="ChEBI" id="CHEBI:26386"/>
        <dbReference type="ChEBI" id="CHEBI:43474"/>
        <dbReference type="ChEBI" id="CHEBI:57259"/>
        <dbReference type="ChEBI" id="CHEBI:142361"/>
        <dbReference type="EC" id="2.4.2.1"/>
    </reaction>
</comment>
<comment type="subunit">
    <text evidence="2">Homohexamer; trimer of homodimers.</text>
</comment>
<comment type="similarity">
    <text evidence="2">Belongs to the PNP/UDP phosphorylase family.</text>
</comment>
<sequence length="239" mass="25979">MATPHINAEMGDFADVVLMPGDPLRAKHIAETFLEDVREVNNVRGMLGFTGTYKGRKISVMGHGMGIPSCSIYTKELITDFGVKKIIRVGSCGAVRMDVKLRDVVIGMGACTDSKVNRIRFKDHDFAAIADFDMVRNAVDAAKALGVDARVGNLFSADLFYSPDGDMFDVMEKYGILGVEMEAAGIYGVAAEFGAKALTICTVSDHIRTHEQTTAAERQTTFNDMIKIALESVLLGDKE</sequence>
<gene>
    <name evidence="2" type="primary">deoD</name>
    <name type="ordered locus">SARI_03008</name>
</gene>
<protein>
    <recommendedName>
        <fullName evidence="2">Purine nucleoside phosphorylase DeoD-type</fullName>
        <shortName evidence="2">PNP</shortName>
        <ecNumber evidence="2">2.4.2.1</ecNumber>
    </recommendedName>
</protein>
<feature type="chain" id="PRO_1000088105" description="Purine nucleoside phosphorylase DeoD-type">
    <location>
        <begin position="1"/>
        <end position="239"/>
    </location>
</feature>
<feature type="active site" description="Proton donor" evidence="2">
    <location>
        <position position="205"/>
    </location>
</feature>
<feature type="binding site" evidence="1">
    <location>
        <position position="5"/>
    </location>
    <ligand>
        <name>a purine D-ribonucleoside</name>
        <dbReference type="ChEBI" id="CHEBI:142355"/>
        <note>ligand shared between dimeric partners</note>
    </ligand>
</feature>
<feature type="binding site" description="in other chain" evidence="1">
    <location>
        <position position="21"/>
    </location>
    <ligand>
        <name>phosphate</name>
        <dbReference type="ChEBI" id="CHEBI:43474"/>
        <note>ligand shared between dimeric partners</note>
    </ligand>
</feature>
<feature type="binding site" description="in other chain" evidence="1">
    <location>
        <position position="25"/>
    </location>
    <ligand>
        <name>phosphate</name>
        <dbReference type="ChEBI" id="CHEBI:43474"/>
        <note>ligand shared between dimeric partners</note>
    </ligand>
</feature>
<feature type="binding site" evidence="1">
    <location>
        <position position="44"/>
    </location>
    <ligand>
        <name>phosphate</name>
        <dbReference type="ChEBI" id="CHEBI:43474"/>
        <note>ligand shared between dimeric partners</note>
    </ligand>
</feature>
<feature type="binding site" description="in other chain" evidence="1">
    <location>
        <begin position="88"/>
        <end position="91"/>
    </location>
    <ligand>
        <name>phosphate</name>
        <dbReference type="ChEBI" id="CHEBI:43474"/>
        <note>ligand shared between dimeric partners</note>
    </ligand>
</feature>
<feature type="binding site" description="in other chain" evidence="1">
    <location>
        <begin position="180"/>
        <end position="182"/>
    </location>
    <ligand>
        <name>a purine D-ribonucleoside</name>
        <dbReference type="ChEBI" id="CHEBI:142355"/>
        <note>ligand shared between dimeric partners</note>
    </ligand>
</feature>
<feature type="binding site" description="in other chain" evidence="1">
    <location>
        <begin position="204"/>
        <end position="205"/>
    </location>
    <ligand>
        <name>a purine D-ribonucleoside</name>
        <dbReference type="ChEBI" id="CHEBI:142355"/>
        <note>ligand shared between dimeric partners</note>
    </ligand>
</feature>
<feature type="site" description="Important for catalytic activity" evidence="2">
    <location>
        <position position="218"/>
    </location>
</feature>